<reference key="1">
    <citation type="journal article" date="2002" name="Nature">
        <title>The genome sequence of Schizosaccharomyces pombe.</title>
        <authorList>
            <person name="Wood V."/>
            <person name="Gwilliam R."/>
            <person name="Rajandream M.A."/>
            <person name="Lyne M.H."/>
            <person name="Lyne R."/>
            <person name="Stewart A."/>
            <person name="Sgouros J.G."/>
            <person name="Peat N."/>
            <person name="Hayles J."/>
            <person name="Baker S.G."/>
            <person name="Basham D."/>
            <person name="Bowman S."/>
            <person name="Brooks K."/>
            <person name="Brown D."/>
            <person name="Brown S."/>
            <person name="Chillingworth T."/>
            <person name="Churcher C.M."/>
            <person name="Collins M."/>
            <person name="Connor R."/>
            <person name="Cronin A."/>
            <person name="Davis P."/>
            <person name="Feltwell T."/>
            <person name="Fraser A."/>
            <person name="Gentles S."/>
            <person name="Goble A."/>
            <person name="Hamlin N."/>
            <person name="Harris D.E."/>
            <person name="Hidalgo J."/>
            <person name="Hodgson G."/>
            <person name="Holroyd S."/>
            <person name="Hornsby T."/>
            <person name="Howarth S."/>
            <person name="Huckle E.J."/>
            <person name="Hunt S."/>
            <person name="Jagels K."/>
            <person name="James K.D."/>
            <person name="Jones L."/>
            <person name="Jones M."/>
            <person name="Leather S."/>
            <person name="McDonald S."/>
            <person name="McLean J."/>
            <person name="Mooney P."/>
            <person name="Moule S."/>
            <person name="Mungall K.L."/>
            <person name="Murphy L.D."/>
            <person name="Niblett D."/>
            <person name="Odell C."/>
            <person name="Oliver K."/>
            <person name="O'Neil S."/>
            <person name="Pearson D."/>
            <person name="Quail M.A."/>
            <person name="Rabbinowitsch E."/>
            <person name="Rutherford K.M."/>
            <person name="Rutter S."/>
            <person name="Saunders D."/>
            <person name="Seeger K."/>
            <person name="Sharp S."/>
            <person name="Skelton J."/>
            <person name="Simmonds M.N."/>
            <person name="Squares R."/>
            <person name="Squares S."/>
            <person name="Stevens K."/>
            <person name="Taylor K."/>
            <person name="Taylor R.G."/>
            <person name="Tivey A."/>
            <person name="Walsh S.V."/>
            <person name="Warren T."/>
            <person name="Whitehead S."/>
            <person name="Woodward J.R."/>
            <person name="Volckaert G."/>
            <person name="Aert R."/>
            <person name="Robben J."/>
            <person name="Grymonprez B."/>
            <person name="Weltjens I."/>
            <person name="Vanstreels E."/>
            <person name="Rieger M."/>
            <person name="Schaefer M."/>
            <person name="Mueller-Auer S."/>
            <person name="Gabel C."/>
            <person name="Fuchs M."/>
            <person name="Duesterhoeft A."/>
            <person name="Fritzc C."/>
            <person name="Holzer E."/>
            <person name="Moestl D."/>
            <person name="Hilbert H."/>
            <person name="Borzym K."/>
            <person name="Langer I."/>
            <person name="Beck A."/>
            <person name="Lehrach H."/>
            <person name="Reinhardt R."/>
            <person name="Pohl T.M."/>
            <person name="Eger P."/>
            <person name="Zimmermann W."/>
            <person name="Wedler H."/>
            <person name="Wambutt R."/>
            <person name="Purnelle B."/>
            <person name="Goffeau A."/>
            <person name="Cadieu E."/>
            <person name="Dreano S."/>
            <person name="Gloux S."/>
            <person name="Lelaure V."/>
            <person name="Mottier S."/>
            <person name="Galibert F."/>
            <person name="Aves S.J."/>
            <person name="Xiang Z."/>
            <person name="Hunt C."/>
            <person name="Moore K."/>
            <person name="Hurst S.M."/>
            <person name="Lucas M."/>
            <person name="Rochet M."/>
            <person name="Gaillardin C."/>
            <person name="Tallada V.A."/>
            <person name="Garzon A."/>
            <person name="Thode G."/>
            <person name="Daga R.R."/>
            <person name="Cruzado L."/>
            <person name="Jimenez J."/>
            <person name="Sanchez M."/>
            <person name="del Rey F."/>
            <person name="Benito J."/>
            <person name="Dominguez A."/>
            <person name="Revuelta J.L."/>
            <person name="Moreno S."/>
            <person name="Armstrong J."/>
            <person name="Forsburg S.L."/>
            <person name="Cerutti L."/>
            <person name="Lowe T."/>
            <person name="McCombie W.R."/>
            <person name="Paulsen I."/>
            <person name="Potashkin J."/>
            <person name="Shpakovski G.V."/>
            <person name="Ussery D."/>
            <person name="Barrell B.G."/>
            <person name="Nurse P."/>
        </authorList>
    </citation>
    <scope>NUCLEOTIDE SEQUENCE [LARGE SCALE GENOMIC DNA]</scope>
    <source>
        <strain>972 / ATCC 24843</strain>
    </source>
</reference>
<gene>
    <name type="ORF">SPBC1703.08c</name>
</gene>
<keyword id="KW-0067">ATP-binding</keyword>
<keyword id="KW-0436">Ligase</keyword>
<keyword id="KW-0547">Nucleotide-binding</keyword>
<keyword id="KW-1185">Reference proteome</keyword>
<proteinExistence type="inferred from homology"/>
<organism>
    <name type="scientific">Schizosaccharomyces pombe (strain 972 / ATCC 24843)</name>
    <name type="common">Fission yeast</name>
    <dbReference type="NCBI Taxonomy" id="284812"/>
    <lineage>
        <taxon>Eukaryota</taxon>
        <taxon>Fungi</taxon>
        <taxon>Dikarya</taxon>
        <taxon>Ascomycota</taxon>
        <taxon>Taphrinomycotina</taxon>
        <taxon>Schizosaccharomycetes</taxon>
        <taxon>Schizosaccharomycetales</taxon>
        <taxon>Schizosaccharomycetaceae</taxon>
        <taxon>Schizosaccharomyces</taxon>
    </lineage>
</organism>
<sequence length="204" mass="23485">MSLKKNQLRAILNSSLGKLADHIIDSQSISICKQVVELPEWKRCKNVCLYMNMPKKEVRTRCLIDVAFKEGKNVFIPKCIGSHVMEMYQVFEKTESLTINKWGIAEPNGESRKIMDDETDCELIIVPGVAFDEKLSRLGHGKGYYDNYISKYQSWALQKESRANMFKVGICLKEQILPNREIPMDTRDQKLDALVTPEKVIRNI</sequence>
<protein>
    <recommendedName>
        <fullName>Probable 5-formyltetrahydrofolate cyclo-ligase</fullName>
        <ecNumber>6.3.3.2</ecNumber>
    </recommendedName>
    <alternativeName>
        <fullName>5,10-methenyl-tetrahydrofolate synthetase</fullName>
        <shortName>MTHFS</shortName>
        <shortName>Methenyl-THF synthetase</shortName>
    </alternativeName>
</protein>
<evidence type="ECO:0000250" key="1"/>
<evidence type="ECO:0000305" key="2"/>
<dbReference type="EC" id="6.3.3.2"/>
<dbReference type="EMBL" id="CU329671">
    <property type="protein sequence ID" value="CAB66452.1"/>
    <property type="molecule type" value="Genomic_DNA"/>
</dbReference>
<dbReference type="PIR" id="T50321">
    <property type="entry name" value="T50321"/>
</dbReference>
<dbReference type="SMR" id="Q9P7W2"/>
<dbReference type="FunCoup" id="Q9P7W2">
    <property type="interactions" value="243"/>
</dbReference>
<dbReference type="STRING" id="284812.Q9P7W2"/>
<dbReference type="PaxDb" id="4896-SPBC1703.08c.1"/>
<dbReference type="EnsemblFungi" id="SPBC1703.08c.1">
    <property type="protein sequence ID" value="SPBC1703.08c.1:pep"/>
    <property type="gene ID" value="SPBC1703.08c"/>
</dbReference>
<dbReference type="KEGG" id="spo:2539626"/>
<dbReference type="PomBase" id="SPBC1703.08c"/>
<dbReference type="VEuPathDB" id="FungiDB:SPBC1703.08c"/>
<dbReference type="eggNOG" id="KOG3093">
    <property type="taxonomic scope" value="Eukaryota"/>
</dbReference>
<dbReference type="HOGENOM" id="CLU_066245_2_1_1"/>
<dbReference type="InParanoid" id="Q9P7W2"/>
<dbReference type="OMA" id="DKWGIPT"/>
<dbReference type="PhylomeDB" id="Q9P7W2"/>
<dbReference type="Reactome" id="R-SPO-196757">
    <property type="pathway name" value="Metabolism of folate and pterines"/>
</dbReference>
<dbReference type="PRO" id="PR:Q9P7W2"/>
<dbReference type="Proteomes" id="UP000002485">
    <property type="component" value="Chromosome II"/>
</dbReference>
<dbReference type="GO" id="GO:0005737">
    <property type="term" value="C:cytoplasm"/>
    <property type="evidence" value="ECO:0000318"/>
    <property type="project" value="GO_Central"/>
</dbReference>
<dbReference type="GO" id="GO:0005739">
    <property type="term" value="C:mitochondrion"/>
    <property type="evidence" value="ECO:0007005"/>
    <property type="project" value="PomBase"/>
</dbReference>
<dbReference type="GO" id="GO:0030272">
    <property type="term" value="F:5-formyltetrahydrofolate cyclo-ligase activity"/>
    <property type="evidence" value="ECO:0000318"/>
    <property type="project" value="GO_Central"/>
</dbReference>
<dbReference type="GO" id="GO:0005524">
    <property type="term" value="F:ATP binding"/>
    <property type="evidence" value="ECO:0007669"/>
    <property type="project" value="UniProtKB-KW"/>
</dbReference>
<dbReference type="GO" id="GO:0009396">
    <property type="term" value="P:folic acid-containing compound biosynthetic process"/>
    <property type="evidence" value="ECO:0000318"/>
    <property type="project" value="GO_Central"/>
</dbReference>
<dbReference type="GO" id="GO:0035999">
    <property type="term" value="P:tetrahydrofolate interconversion"/>
    <property type="evidence" value="ECO:0000318"/>
    <property type="project" value="GO_Central"/>
</dbReference>
<dbReference type="Gene3D" id="3.40.50.10420">
    <property type="entry name" value="NagB/RpiA/CoA transferase-like"/>
    <property type="match status" value="1"/>
</dbReference>
<dbReference type="InterPro" id="IPR002698">
    <property type="entry name" value="FTHF_cligase"/>
</dbReference>
<dbReference type="InterPro" id="IPR024185">
    <property type="entry name" value="FTHF_cligase-like_sf"/>
</dbReference>
<dbReference type="InterPro" id="IPR037171">
    <property type="entry name" value="NagB/RpiA_transferase-like"/>
</dbReference>
<dbReference type="NCBIfam" id="TIGR02727">
    <property type="entry name" value="MTHFS_bact"/>
    <property type="match status" value="1"/>
</dbReference>
<dbReference type="PANTHER" id="PTHR23407:SF1">
    <property type="entry name" value="5-FORMYLTETRAHYDROFOLATE CYCLO-LIGASE"/>
    <property type="match status" value="1"/>
</dbReference>
<dbReference type="PANTHER" id="PTHR23407">
    <property type="entry name" value="ATPASE INHIBITOR/5-FORMYLTETRAHYDROFOLATE CYCLO-LIGASE"/>
    <property type="match status" value="1"/>
</dbReference>
<dbReference type="Pfam" id="PF01812">
    <property type="entry name" value="5-FTHF_cyc-lig"/>
    <property type="match status" value="1"/>
</dbReference>
<dbReference type="PIRSF" id="PIRSF006806">
    <property type="entry name" value="FTHF_cligase"/>
    <property type="match status" value="1"/>
</dbReference>
<dbReference type="SUPFAM" id="SSF100950">
    <property type="entry name" value="NagB/RpiA/CoA transferase-like"/>
    <property type="match status" value="1"/>
</dbReference>
<comment type="catalytic activity">
    <reaction>
        <text>(6S)-5-formyl-5,6,7,8-tetrahydrofolate + ATP = (6R)-5,10-methenyltetrahydrofolate + ADP + phosphate</text>
        <dbReference type="Rhea" id="RHEA:10488"/>
        <dbReference type="ChEBI" id="CHEBI:30616"/>
        <dbReference type="ChEBI" id="CHEBI:43474"/>
        <dbReference type="ChEBI" id="CHEBI:57455"/>
        <dbReference type="ChEBI" id="CHEBI:57457"/>
        <dbReference type="ChEBI" id="CHEBI:456216"/>
        <dbReference type="EC" id="6.3.3.2"/>
    </reaction>
</comment>
<comment type="similarity">
    <text evidence="2">Belongs to the 5-formyltetrahydrofolate cyclo-ligase family.</text>
</comment>
<feature type="chain" id="PRO_0000200279" description="Probable 5-formyltetrahydrofolate cyclo-ligase">
    <location>
        <begin position="1"/>
        <end position="204"/>
    </location>
</feature>
<feature type="binding site" evidence="1">
    <location>
        <begin position="5"/>
        <end position="9"/>
    </location>
    <ligand>
        <name>ATP</name>
        <dbReference type="ChEBI" id="CHEBI:30616"/>
    </ligand>
</feature>
<feature type="binding site" evidence="1">
    <location>
        <position position="57"/>
    </location>
    <ligand>
        <name>substrate</name>
    </ligand>
</feature>
<feature type="binding site" evidence="1">
    <location>
        <position position="102"/>
    </location>
    <ligand>
        <name>substrate</name>
    </ligand>
</feature>
<feature type="binding site" evidence="1">
    <location>
        <begin position="139"/>
        <end position="146"/>
    </location>
    <ligand>
        <name>ATP</name>
        <dbReference type="ChEBI" id="CHEBI:30616"/>
    </ligand>
</feature>
<feature type="binding site" evidence="1">
    <location>
        <begin position="140"/>
        <end position="144"/>
    </location>
    <ligand>
        <name>substrate</name>
    </ligand>
</feature>
<feature type="binding site" evidence="1">
    <location>
        <position position="188"/>
    </location>
    <ligand>
        <name>ATP</name>
        <dbReference type="ChEBI" id="CHEBI:30616"/>
    </ligand>
</feature>
<name>FTHC_SCHPO</name>
<accession>Q9P7W2</accession>